<gene>
    <name evidence="8" type="primary">GBP130</name>
    <name evidence="9" type="synonym">GBP</name>
</gene>
<protein>
    <recommendedName>
        <fullName evidence="10">Glycophorin-binding protein 130</fullName>
        <shortName evidence="8">GBP130 protein</shortName>
    </recommendedName>
</protein>
<keyword id="KW-1035">Host cytoplasm</keyword>
<keyword id="KW-0461">Malaria</keyword>
<keyword id="KW-0477">Merozoite</keyword>
<keyword id="KW-0677">Repeat</keyword>
<keyword id="KW-0964">Secreted</keyword>
<proteinExistence type="evidence at protein level"/>
<organism>
    <name type="scientific">Plasmodium falciparum (isolate FCR-3 / Gambia)</name>
    <dbReference type="NCBI Taxonomy" id="5838"/>
    <lineage>
        <taxon>Eukaryota</taxon>
        <taxon>Sar</taxon>
        <taxon>Alveolata</taxon>
        <taxon>Apicomplexa</taxon>
        <taxon>Aconoidasida</taxon>
        <taxon>Haemosporida</taxon>
        <taxon>Plasmodiidae</taxon>
        <taxon>Plasmodium</taxon>
        <taxon>Plasmodium (Laverania)</taxon>
    </lineage>
</organism>
<feature type="chain" id="PRO_0000217186" description="Glycophorin-binding protein 130">
    <location>
        <begin position="1"/>
        <end position="774"/>
    </location>
</feature>
<feature type="repeat" description="GBP 1" evidence="2">
    <location>
        <begin position="226"/>
        <end position="275"/>
    </location>
</feature>
<feature type="repeat" description="GBP 2" evidence="2">
    <location>
        <begin position="276"/>
        <end position="325"/>
    </location>
</feature>
<feature type="repeat" description="GBP 3" evidence="2">
    <location>
        <begin position="326"/>
        <end position="375"/>
    </location>
</feature>
<feature type="repeat" description="GBP 4" evidence="2">
    <location>
        <begin position="376"/>
        <end position="425"/>
    </location>
</feature>
<feature type="repeat" description="GBP 5" evidence="2">
    <location>
        <begin position="426"/>
        <end position="474"/>
    </location>
</feature>
<feature type="repeat" description="GBP 6" evidence="2">
    <location>
        <begin position="475"/>
        <end position="524"/>
    </location>
</feature>
<feature type="repeat" description="GBP 7" evidence="2">
    <location>
        <begin position="525"/>
        <end position="574"/>
    </location>
</feature>
<feature type="repeat" description="GBP 8" evidence="2">
    <location>
        <begin position="575"/>
        <end position="624"/>
    </location>
</feature>
<feature type="repeat" description="GBP 9" evidence="2">
    <location>
        <begin position="625"/>
        <end position="674"/>
    </location>
</feature>
<feature type="repeat" description="GBP 10" evidence="2">
    <location>
        <begin position="675"/>
        <end position="724"/>
    </location>
</feature>
<feature type="repeat" description="GBP 11" evidence="2">
    <location>
        <begin position="725"/>
        <end position="774"/>
    </location>
</feature>
<feature type="region of interest" description="Disordered" evidence="3">
    <location>
        <begin position="97"/>
        <end position="243"/>
    </location>
</feature>
<feature type="region of interest" description="Disordered" evidence="3">
    <location>
        <begin position="256"/>
        <end position="291"/>
    </location>
</feature>
<feature type="region of interest" description="Disordered" evidence="3">
    <location>
        <begin position="310"/>
        <end position="334"/>
    </location>
</feature>
<feature type="region of interest" description="Disordered" evidence="3">
    <location>
        <begin position="358"/>
        <end position="383"/>
    </location>
</feature>
<feature type="region of interest" description="Disordered" evidence="3">
    <location>
        <begin position="410"/>
        <end position="434"/>
    </location>
</feature>
<feature type="region of interest" description="Disordered" evidence="3">
    <location>
        <begin position="458"/>
        <end position="481"/>
    </location>
</feature>
<feature type="region of interest" description="Disordered" evidence="3">
    <location>
        <begin position="509"/>
        <end position="533"/>
    </location>
</feature>
<feature type="region of interest" description="Disordered" evidence="3">
    <location>
        <begin position="609"/>
        <end position="632"/>
    </location>
</feature>
<feature type="region of interest" description="Disordered" evidence="3">
    <location>
        <begin position="661"/>
        <end position="682"/>
    </location>
</feature>
<feature type="region of interest" description="Disordered" evidence="3">
    <location>
        <begin position="709"/>
        <end position="734"/>
    </location>
</feature>
<feature type="short sequence motif" description="PEXEL motif" evidence="1">
    <location>
        <begin position="84"/>
        <end position="88"/>
    </location>
</feature>
<feature type="compositionally biased region" description="Basic and acidic residues" evidence="3">
    <location>
        <begin position="117"/>
        <end position="140"/>
    </location>
</feature>
<feature type="compositionally biased region" description="Basic and acidic residues" evidence="3">
    <location>
        <begin position="174"/>
        <end position="198"/>
    </location>
</feature>
<feature type="compositionally biased region" description="Polar residues" evidence="3">
    <location>
        <begin position="201"/>
        <end position="228"/>
    </location>
</feature>
<feature type="compositionally biased region" description="Basic and acidic residues" evidence="3">
    <location>
        <begin position="264"/>
        <end position="276"/>
    </location>
</feature>
<feature type="compositionally biased region" description="Basic and acidic residues" evidence="3">
    <location>
        <begin position="314"/>
        <end position="326"/>
    </location>
</feature>
<feature type="compositionally biased region" description="Basic and acidic residues" evidence="3">
    <location>
        <begin position="364"/>
        <end position="376"/>
    </location>
</feature>
<feature type="compositionally biased region" description="Basic and acidic residues" evidence="3">
    <location>
        <begin position="414"/>
        <end position="426"/>
    </location>
</feature>
<feature type="compositionally biased region" description="Basic and acidic residues" evidence="3">
    <location>
        <begin position="464"/>
        <end position="476"/>
    </location>
</feature>
<feature type="compositionally biased region" description="Basic and acidic residues" evidence="3">
    <location>
        <begin position="513"/>
        <end position="525"/>
    </location>
</feature>
<feature type="compositionally biased region" description="Basic and acidic residues" evidence="3">
    <location>
        <begin position="613"/>
        <end position="625"/>
    </location>
</feature>
<feature type="compositionally biased region" description="Basic and acidic residues" evidence="3">
    <location>
        <begin position="663"/>
        <end position="675"/>
    </location>
</feature>
<feature type="compositionally biased region" description="Basic and acidic residues" evidence="3">
    <location>
        <begin position="713"/>
        <end position="725"/>
    </location>
</feature>
<feature type="sequence conflict" description="In Ref. 2; AAA29606." evidence="10" ref="2">
    <original>E</original>
    <variation>A</variation>
    <location>
        <position position="344"/>
    </location>
</feature>
<feature type="sequence conflict" description="In Ref. 3; AAA29607." evidence="10" ref="3">
    <original>T</original>
    <variation>A</variation>
    <location>
        <position position="556"/>
    </location>
</feature>
<feature type="sequence conflict" description="In Ref. 3; AAA29607." evidence="10" ref="3">
    <original>E</original>
    <variation>D</variation>
    <location>
        <position position="563"/>
    </location>
</feature>
<feature type="sequence conflict" description="In Ref. 3; AAA29607." evidence="10" ref="3">
    <original>D</original>
    <variation>E</variation>
    <location>
        <position position="570"/>
    </location>
</feature>
<feature type="sequence conflict" description="In Ref. 3; AAA29607." evidence="10" ref="3">
    <original>A</original>
    <variation>V</variation>
    <location>
        <position position="640"/>
    </location>
</feature>
<feature type="sequence conflict" description="In Ref. 3; AAA29607." evidence="10" ref="3">
    <original>S</original>
    <variation>P</variation>
    <location>
        <position position="690"/>
    </location>
</feature>
<feature type="sequence conflict" description="In Ref. 3; AAA29607." evidence="10" ref="3">
    <original>H</original>
    <variation>D</variation>
    <location>
        <position position="747"/>
    </location>
</feature>
<comment type="function">
    <text evidence="4 7">Involved in merozoite invasion of host erythrocytes.</text>
</comment>
<comment type="subunit">
    <text evidence="4 7">Interacts with host glycophorin.</text>
</comment>
<comment type="subcellular location">
    <subcellularLocation>
        <location evidence="5">Secreted</location>
    </subcellularLocation>
    <subcellularLocation>
        <location evidence="7">Cell surface</location>
    </subcellularLocation>
    <subcellularLocation>
        <location evidence="5">Host cytoplasm</location>
    </subcellularLocation>
    <text evidence="5 7">Secreted at the schizont stage into the host erythrocyte cytoplasm (PubMed:3553939). Localizes to the cell surface of free merozoites to some extent (PubMed:3553939, PubMed:6206188).</text>
</comment>
<comment type="developmental stage">
    <text evidence="5 6 7">During the asexual blood stage, expressed at the trophozoite and schizont stages (at protein level).</text>
</comment>
<comment type="domain">
    <text evidence="1">The PEXEL motif is involved in the protein translocation through the parasitophorous vacuole membrane and into the host erythrocyte cytoplasm.</text>
</comment>
<dbReference type="EMBL" id="M12897">
    <property type="protein sequence ID" value="AAA29608.1"/>
    <property type="molecule type" value="Genomic_DNA"/>
</dbReference>
<dbReference type="EMBL" id="M15212">
    <property type="protein sequence ID" value="AAA29606.1"/>
    <property type="molecule type" value="mRNA"/>
</dbReference>
<dbReference type="EMBL" id="M10985">
    <property type="protein sequence ID" value="AAA29607.1"/>
    <property type="molecule type" value="mRNA"/>
</dbReference>
<dbReference type="PIR" id="A03390">
    <property type="entry name" value="ZOZQMF"/>
</dbReference>
<dbReference type="PIR" id="A24057">
    <property type="entry name" value="A24057"/>
</dbReference>
<dbReference type="PIR" id="A54532">
    <property type="entry name" value="A54532"/>
</dbReference>
<dbReference type="VEuPathDB" id="PlasmoDB:PF3D7_1016300"/>
<dbReference type="VEuPathDB" id="PlasmoDB:Pf7G8-2_000301900"/>
<dbReference type="VEuPathDB" id="PlasmoDB:Pf7G8_100020800"/>
<dbReference type="VEuPathDB" id="PlasmoDB:PfCD01_100021600"/>
<dbReference type="VEuPathDB" id="PlasmoDB:PfDd2_100021700"/>
<dbReference type="VEuPathDB" id="PlasmoDB:PfGA01_100021700"/>
<dbReference type="VEuPathDB" id="PlasmoDB:PfGB4_100021400"/>
<dbReference type="VEuPathDB" id="PlasmoDB:PfGN01_100021900"/>
<dbReference type="VEuPathDB" id="PlasmoDB:PfHB3_100020800"/>
<dbReference type="VEuPathDB" id="PlasmoDB:PfIT_100020400"/>
<dbReference type="VEuPathDB" id="PlasmoDB:PfKE01_100021700"/>
<dbReference type="VEuPathDB" id="PlasmoDB:PfKH01_100020900"/>
<dbReference type="VEuPathDB" id="PlasmoDB:PfKH02_100021800"/>
<dbReference type="VEuPathDB" id="PlasmoDB:PfML01_100020600"/>
<dbReference type="VEuPathDB" id="PlasmoDB:PfNF135_100021700"/>
<dbReference type="VEuPathDB" id="PlasmoDB:PfNF166_130006400"/>
<dbReference type="VEuPathDB" id="PlasmoDB:PfNF54_100021500"/>
<dbReference type="VEuPathDB" id="PlasmoDB:PfSD01_100021000"/>
<dbReference type="VEuPathDB" id="PlasmoDB:PfSN01_100021800"/>
<dbReference type="VEuPathDB" id="PlasmoDB:PfTG01_100021600"/>
<dbReference type="GO" id="GO:0009986">
    <property type="term" value="C:cell surface"/>
    <property type="evidence" value="ECO:0007669"/>
    <property type="project" value="UniProtKB-SubCell"/>
</dbReference>
<dbReference type="GO" id="GO:0005576">
    <property type="term" value="C:extracellular region"/>
    <property type="evidence" value="ECO:0007669"/>
    <property type="project" value="UniProtKB-SubCell"/>
</dbReference>
<dbReference type="GO" id="GO:0030430">
    <property type="term" value="C:host cell cytoplasm"/>
    <property type="evidence" value="ECO:0007669"/>
    <property type="project" value="UniProtKB-SubCell"/>
</dbReference>
<dbReference type="InterPro" id="IPR003681">
    <property type="entry name" value="Glycophorin-bd"/>
</dbReference>
<dbReference type="Pfam" id="PF02526">
    <property type="entry name" value="GBP_repeat"/>
    <property type="match status" value="11"/>
</dbReference>
<dbReference type="PROSITE" id="PS51069">
    <property type="entry name" value="GBP"/>
    <property type="match status" value="11"/>
</dbReference>
<evidence type="ECO:0000250" key="1">
    <source>
        <dbReference type="UniProtKB" id="Q8I6U8"/>
    </source>
</evidence>
<evidence type="ECO:0000255" key="2">
    <source>
        <dbReference type="PROSITE-ProRule" id="PRU00402"/>
    </source>
</evidence>
<evidence type="ECO:0000256" key="3">
    <source>
        <dbReference type="SAM" id="MobiDB-lite"/>
    </source>
</evidence>
<evidence type="ECO:0000269" key="4">
    <source>
    </source>
</evidence>
<evidence type="ECO:0000269" key="5">
    <source>
    </source>
</evidence>
<evidence type="ECO:0000269" key="6">
    <source>
    </source>
</evidence>
<evidence type="ECO:0000269" key="7">
    <source>
    </source>
</evidence>
<evidence type="ECO:0000303" key="8">
    <source>
    </source>
</evidence>
<evidence type="ECO:0000303" key="9">
    <source>
    </source>
</evidence>
<evidence type="ECO:0000305" key="10"/>
<evidence type="ECO:0000312" key="11">
    <source>
        <dbReference type="EMBL" id="AAA29606.1"/>
    </source>
</evidence>
<accession>P02895</accession>
<accession>Q25858</accession>
<name>GBP_PLAFG</name>
<sequence>MRLSKVSDIKSTGVSNYKNFNSKNSSKYSLMEVSKKNEKKNSLGAFHSKKILLIFGIIYVVLLNAYICGDKYEKAVDYGFRESRILAEGEDTCARKEKTTLRKSKQKTSTRTVATQTKKDEENKSVVTEEQKVESDSEKQKRTKKVVKKQINIGDTENQKEGKNVKKVIKKEKKKEESGKPEENKHANEASKKKEPKASKVSQKPSTSTRSNNEVKIRAASNQETLTSADPEGQIMREYAADPEYRKHLEIFYKILTNTDPNDEVERRNADNKEDLTSADPEGQIMREYASDPEYRKHLEIFYKILTNTDPNDDVERRNADNKEDLTSADPEGQIMREYAADPEYRKHLEVFHKILTNTDPNDEVERRNADNKEDLTSADPEGQIMREYAADPEYRKHLEIFHKILTNTDPNDEVERRNADNKEDLTSADPEGQIMREYAADPEYRKHLEVFHKILTNTDPNDEVERRNADNKELTSSDPEGQIMREYAADPEYRKHLEIFHKILTNTDPNDEVERRNADNKEDLTSADPEGQIMREYAADPEYRKHLEIFYKILTNTDPNDEVERRNADNKEELTSSDPEGQIMREYAADPEYRKHLEIFHKILTNTDPNDEVERRNADNKEDLTSADPEGQIMREYAADPEYRKHLEIFYKILTNTDPNDEVERRNADNKEDLTSADPEGQIMREYASDPEYRKHLEIFYKILTNTDPNDDVERRNADNKEDLTSADPEGQIMREYAADPEYRKHLEIFHKILTNTDPNDEVERQNADNNEA</sequence>
<reference key="1">
    <citation type="journal article" date="1986" name="Cell">
        <title>A tandemly repeated sequence determines the binding domain for an erythrocyte receptor binding protein of P. falciparum.</title>
        <authorList>
            <person name="Kochan J."/>
            <person name="Perkins M."/>
            <person name="Ravetch J.V."/>
        </authorList>
    </citation>
    <scope>NUCLEOTIDE SEQUENCE [GENOMIC DNA]</scope>
    <scope>FUNCTION</scope>
    <scope>INTERACTION WITH HOST GLYCOPHORIN</scope>
</reference>
<reference evidence="11" key="2">
    <citation type="journal article" date="1987" name="Mol. Biochem. Parasitol.">
        <title>Putative glycophorin-binding protein is secreted from schizonts of Plasmodium falciparum.</title>
        <authorList>
            <person name="Bianco A.E."/>
            <person name="Culvenor J.G."/>
            <person name="Coppel R.L."/>
            <person name="Crewther P.E."/>
            <person name="McIntyre P."/>
            <person name="Favaloro J.M."/>
            <person name="Brown G.V."/>
            <person name="Kemp D.J."/>
            <person name="Anders R.F."/>
        </authorList>
    </citation>
    <scope>NUCLEOTIDE SEQUENCE [MRNA] OF 344-415</scope>
    <scope>SUBCELLULAR LOCATION</scope>
    <scope>DEVELOPMENTAL STAGE</scope>
    <source>
        <strain evidence="11">Isolate FC27</strain>
    </source>
</reference>
<reference key="3">
    <citation type="journal article" date="1985" name="Science">
        <title>Isolation of the gene for a glycophorin-binding protein implicated in erythrocyte invasion by a malaria parasite.</title>
        <authorList>
            <person name="Ravetch J.V."/>
            <person name="Kochan J."/>
            <person name="Perkins M."/>
        </authorList>
    </citation>
    <scope>NUCLEOTIDE SEQUENCE [MRNA] OF 556-774</scope>
    <scope>DEVELOPMENTAL STAGE</scope>
</reference>
<reference key="4">
    <citation type="journal article" date="1984" name="J. Exp. Med.">
        <title>Surface proteins of Plasmodium falciparum merozoites binding to the erythrocyte receptor, glycophorin.</title>
        <authorList>
            <person name="Perkins M.E."/>
        </authorList>
    </citation>
    <scope>FUNCTION</scope>
    <scope>INTERACTION WITH HOST GLYCOPHORIN</scope>
    <scope>SUBCELLULAR LOCATION</scope>
    <scope>DEVELOPMENTAL STAGE</scope>
</reference>